<accession>B7MAC8</accession>
<sequence>MKVTLPEFERAGVMVVGDVMLDRYWYGPTSRISPEAPVPVVKVNTIEERPGGAANVAMNIASLGANARLVGLTGIDDAARALSKSLADVNVKCDFVSVPTHPTITKLRVLSRNQQLIRLDFEEGFEGVDPQPLHERINQALSSIGALVLSDYAKGALASVQQMIQLARKAGVPVLIDPKGTDFERYRGATLLTPNLSEFEAVVGKCKTEEEIVERGMKLIADYELSALLVTRSEQGMSLLQPGKAPLHMPTQAQEVYDVTGAGDTVIGVLAATLAAGNSLEEACFFANAAAGVVVGKLGTSTVSPIELENAVRGRADTGFGVMTEEELKLAVAAARKRGEKVVMTNGVFDILHAGHVSYLANARKLGDRLIVAVNSDASTKRLKGDSRPVNPLEQRMIVLGALEAVDWVVSFEEDTPQRLIAGILPDLLVKGGDYKPEEIAGSKEVWANGGEVLVLNFEDGCSTTNIIKKIQLDKKG</sequence>
<evidence type="ECO:0000255" key="1">
    <source>
        <dbReference type="HAMAP-Rule" id="MF_01603"/>
    </source>
</evidence>
<protein>
    <recommendedName>
        <fullName evidence="1">Bifunctional protein HldE</fullName>
    </recommendedName>
    <domain>
        <recommendedName>
            <fullName evidence="1">D-beta-D-heptose 7-phosphate kinase</fullName>
            <ecNumber evidence="1">2.7.1.167</ecNumber>
        </recommendedName>
        <alternativeName>
            <fullName evidence="1">D-beta-D-heptose 7-phosphotransferase</fullName>
        </alternativeName>
        <alternativeName>
            <fullName evidence="1">D-glycero-beta-D-manno-heptose-7-phosphate kinase</fullName>
        </alternativeName>
    </domain>
    <domain>
        <recommendedName>
            <fullName evidence="1">D-beta-D-heptose 1-phosphate adenylyltransferase</fullName>
            <ecNumber evidence="1">2.7.7.70</ecNumber>
        </recommendedName>
        <alternativeName>
            <fullName evidence="1">D-glycero-beta-D-manno-heptose 1-phosphate adenylyltransferase</fullName>
        </alternativeName>
    </domain>
</protein>
<reference key="1">
    <citation type="journal article" date="2009" name="PLoS Genet.">
        <title>Organised genome dynamics in the Escherichia coli species results in highly diverse adaptive paths.</title>
        <authorList>
            <person name="Touchon M."/>
            <person name="Hoede C."/>
            <person name="Tenaillon O."/>
            <person name="Barbe V."/>
            <person name="Baeriswyl S."/>
            <person name="Bidet P."/>
            <person name="Bingen E."/>
            <person name="Bonacorsi S."/>
            <person name="Bouchier C."/>
            <person name="Bouvet O."/>
            <person name="Calteau A."/>
            <person name="Chiapello H."/>
            <person name="Clermont O."/>
            <person name="Cruveiller S."/>
            <person name="Danchin A."/>
            <person name="Diard M."/>
            <person name="Dossat C."/>
            <person name="Karoui M.E."/>
            <person name="Frapy E."/>
            <person name="Garry L."/>
            <person name="Ghigo J.M."/>
            <person name="Gilles A.M."/>
            <person name="Johnson J."/>
            <person name="Le Bouguenec C."/>
            <person name="Lescat M."/>
            <person name="Mangenot S."/>
            <person name="Martinez-Jehanne V."/>
            <person name="Matic I."/>
            <person name="Nassif X."/>
            <person name="Oztas S."/>
            <person name="Petit M.A."/>
            <person name="Pichon C."/>
            <person name="Rouy Z."/>
            <person name="Ruf C.S."/>
            <person name="Schneider D."/>
            <person name="Tourret J."/>
            <person name="Vacherie B."/>
            <person name="Vallenet D."/>
            <person name="Medigue C."/>
            <person name="Rocha E.P.C."/>
            <person name="Denamur E."/>
        </authorList>
    </citation>
    <scope>NUCLEOTIDE SEQUENCE [LARGE SCALE GENOMIC DNA]</scope>
    <source>
        <strain>S88 / ExPEC</strain>
    </source>
</reference>
<comment type="function">
    <text evidence="1">Catalyzes the phosphorylation of D-glycero-D-manno-heptose 7-phosphate at the C-1 position to selectively form D-glycero-beta-D-manno-heptose-1,7-bisphosphate.</text>
</comment>
<comment type="function">
    <text evidence="1">Catalyzes the ADP transfer from ATP to D-glycero-beta-D-manno-heptose 1-phosphate, yielding ADP-D-glycero-beta-D-manno-heptose.</text>
</comment>
<comment type="catalytic activity">
    <reaction evidence="1">
        <text>D-glycero-beta-D-manno-heptose 7-phosphate + ATP = D-glycero-beta-D-manno-heptose 1,7-bisphosphate + ADP + H(+)</text>
        <dbReference type="Rhea" id="RHEA:27473"/>
        <dbReference type="ChEBI" id="CHEBI:15378"/>
        <dbReference type="ChEBI" id="CHEBI:30616"/>
        <dbReference type="ChEBI" id="CHEBI:60204"/>
        <dbReference type="ChEBI" id="CHEBI:60208"/>
        <dbReference type="ChEBI" id="CHEBI:456216"/>
        <dbReference type="EC" id="2.7.1.167"/>
    </reaction>
</comment>
<comment type="catalytic activity">
    <reaction evidence="1">
        <text>D-glycero-beta-D-manno-heptose 1-phosphate + ATP + H(+) = ADP-D-glycero-beta-D-manno-heptose + diphosphate</text>
        <dbReference type="Rhea" id="RHEA:27465"/>
        <dbReference type="ChEBI" id="CHEBI:15378"/>
        <dbReference type="ChEBI" id="CHEBI:30616"/>
        <dbReference type="ChEBI" id="CHEBI:33019"/>
        <dbReference type="ChEBI" id="CHEBI:59967"/>
        <dbReference type="ChEBI" id="CHEBI:61593"/>
        <dbReference type="EC" id="2.7.7.70"/>
    </reaction>
</comment>
<comment type="pathway">
    <text evidence="1">Nucleotide-sugar biosynthesis; ADP-L-glycero-beta-D-manno-heptose biosynthesis; ADP-L-glycero-beta-D-manno-heptose from D-glycero-beta-D-manno-heptose 7-phosphate: step 1/4.</text>
</comment>
<comment type="pathway">
    <text evidence="1">Nucleotide-sugar biosynthesis; ADP-L-glycero-beta-D-manno-heptose biosynthesis; ADP-L-glycero-beta-D-manno-heptose from D-glycero-beta-D-manno-heptose 7-phosphate: step 3/4.</text>
</comment>
<comment type="subunit">
    <text evidence="1">Homodimer.</text>
</comment>
<comment type="similarity">
    <text evidence="1">In the N-terminal section; belongs to the carbohydrate kinase PfkB family.</text>
</comment>
<comment type="similarity">
    <text evidence="1">In the C-terminal section; belongs to the cytidylyltransferase family.</text>
</comment>
<organism>
    <name type="scientific">Escherichia coli O45:K1 (strain S88 / ExPEC)</name>
    <dbReference type="NCBI Taxonomy" id="585035"/>
    <lineage>
        <taxon>Bacteria</taxon>
        <taxon>Pseudomonadati</taxon>
        <taxon>Pseudomonadota</taxon>
        <taxon>Gammaproteobacteria</taxon>
        <taxon>Enterobacterales</taxon>
        <taxon>Enterobacteriaceae</taxon>
        <taxon>Escherichia</taxon>
    </lineage>
</organism>
<dbReference type="EC" id="2.7.1.167" evidence="1"/>
<dbReference type="EC" id="2.7.7.70" evidence="1"/>
<dbReference type="EMBL" id="CU928161">
    <property type="protein sequence ID" value="CAR04678.1"/>
    <property type="molecule type" value="Genomic_DNA"/>
</dbReference>
<dbReference type="RefSeq" id="WP_000869177.1">
    <property type="nucleotide sequence ID" value="NC_011742.1"/>
</dbReference>
<dbReference type="SMR" id="B7MAC8"/>
<dbReference type="KEGG" id="ecz:ECS88_3449"/>
<dbReference type="HOGENOM" id="CLU_021150_2_1_6"/>
<dbReference type="UniPathway" id="UPA00356">
    <property type="reaction ID" value="UER00437"/>
</dbReference>
<dbReference type="UniPathway" id="UPA00356">
    <property type="reaction ID" value="UER00439"/>
</dbReference>
<dbReference type="Proteomes" id="UP000000747">
    <property type="component" value="Chromosome"/>
</dbReference>
<dbReference type="GO" id="GO:0005829">
    <property type="term" value="C:cytosol"/>
    <property type="evidence" value="ECO:0007669"/>
    <property type="project" value="TreeGrafter"/>
</dbReference>
<dbReference type="GO" id="GO:0005524">
    <property type="term" value="F:ATP binding"/>
    <property type="evidence" value="ECO:0007669"/>
    <property type="project" value="UniProtKB-UniRule"/>
</dbReference>
<dbReference type="GO" id="GO:0033785">
    <property type="term" value="F:heptose 7-phosphate kinase activity"/>
    <property type="evidence" value="ECO:0007669"/>
    <property type="project" value="UniProtKB-UniRule"/>
</dbReference>
<dbReference type="GO" id="GO:0033786">
    <property type="term" value="F:heptose-1-phosphate adenylyltransferase activity"/>
    <property type="evidence" value="ECO:0007669"/>
    <property type="project" value="UniProtKB-UniRule"/>
</dbReference>
<dbReference type="GO" id="GO:0016773">
    <property type="term" value="F:phosphotransferase activity, alcohol group as acceptor"/>
    <property type="evidence" value="ECO:0007669"/>
    <property type="project" value="InterPro"/>
</dbReference>
<dbReference type="GO" id="GO:0097171">
    <property type="term" value="P:ADP-L-glycero-beta-D-manno-heptose biosynthetic process"/>
    <property type="evidence" value="ECO:0007669"/>
    <property type="project" value="UniProtKB-UniPathway"/>
</dbReference>
<dbReference type="CDD" id="cd01172">
    <property type="entry name" value="RfaE_like"/>
    <property type="match status" value="1"/>
</dbReference>
<dbReference type="FunFam" id="3.40.1190.20:FF:000002">
    <property type="entry name" value="Bifunctional protein HldE"/>
    <property type="match status" value="1"/>
</dbReference>
<dbReference type="FunFam" id="3.40.50.620:FF:000028">
    <property type="entry name" value="Bifunctional protein HldE"/>
    <property type="match status" value="1"/>
</dbReference>
<dbReference type="Gene3D" id="3.40.1190.20">
    <property type="match status" value="1"/>
</dbReference>
<dbReference type="Gene3D" id="3.40.50.620">
    <property type="entry name" value="HUPs"/>
    <property type="match status" value="1"/>
</dbReference>
<dbReference type="HAMAP" id="MF_01603">
    <property type="entry name" value="HldE"/>
    <property type="match status" value="1"/>
</dbReference>
<dbReference type="InterPro" id="IPR023030">
    <property type="entry name" value="Bifunc_HldE"/>
</dbReference>
<dbReference type="InterPro" id="IPR002173">
    <property type="entry name" value="Carboh/pur_kinase_PfkB_CS"/>
</dbReference>
<dbReference type="InterPro" id="IPR004821">
    <property type="entry name" value="Cyt_trans-like"/>
</dbReference>
<dbReference type="InterPro" id="IPR011611">
    <property type="entry name" value="PfkB_dom"/>
</dbReference>
<dbReference type="InterPro" id="IPR011913">
    <property type="entry name" value="RfaE_dom_I"/>
</dbReference>
<dbReference type="InterPro" id="IPR011914">
    <property type="entry name" value="RfaE_dom_II"/>
</dbReference>
<dbReference type="InterPro" id="IPR029056">
    <property type="entry name" value="Ribokinase-like"/>
</dbReference>
<dbReference type="InterPro" id="IPR014729">
    <property type="entry name" value="Rossmann-like_a/b/a_fold"/>
</dbReference>
<dbReference type="NCBIfam" id="TIGR00125">
    <property type="entry name" value="cyt_tran_rel"/>
    <property type="match status" value="1"/>
</dbReference>
<dbReference type="NCBIfam" id="NF008454">
    <property type="entry name" value="PRK11316.1"/>
    <property type="match status" value="1"/>
</dbReference>
<dbReference type="NCBIfam" id="TIGR02198">
    <property type="entry name" value="rfaE_dom_I"/>
    <property type="match status" value="1"/>
</dbReference>
<dbReference type="NCBIfam" id="TIGR02199">
    <property type="entry name" value="rfaE_dom_II"/>
    <property type="match status" value="1"/>
</dbReference>
<dbReference type="PANTHER" id="PTHR46969">
    <property type="entry name" value="BIFUNCTIONAL PROTEIN HLDE"/>
    <property type="match status" value="1"/>
</dbReference>
<dbReference type="PANTHER" id="PTHR46969:SF1">
    <property type="entry name" value="BIFUNCTIONAL PROTEIN HLDE"/>
    <property type="match status" value="1"/>
</dbReference>
<dbReference type="Pfam" id="PF01467">
    <property type="entry name" value="CTP_transf_like"/>
    <property type="match status" value="1"/>
</dbReference>
<dbReference type="Pfam" id="PF00294">
    <property type="entry name" value="PfkB"/>
    <property type="match status" value="1"/>
</dbReference>
<dbReference type="SUPFAM" id="SSF52374">
    <property type="entry name" value="Nucleotidylyl transferase"/>
    <property type="match status" value="1"/>
</dbReference>
<dbReference type="SUPFAM" id="SSF53613">
    <property type="entry name" value="Ribokinase-like"/>
    <property type="match status" value="1"/>
</dbReference>
<dbReference type="PROSITE" id="PS00583">
    <property type="entry name" value="PFKB_KINASES_1"/>
    <property type="match status" value="1"/>
</dbReference>
<feature type="chain" id="PRO_1000185800" description="Bifunctional protein HldE">
    <location>
        <begin position="1"/>
        <end position="477"/>
    </location>
</feature>
<feature type="region of interest" description="Ribokinase">
    <location>
        <begin position="1"/>
        <end position="318"/>
    </location>
</feature>
<feature type="region of interest" description="Cytidylyltransferase">
    <location>
        <begin position="344"/>
        <end position="477"/>
    </location>
</feature>
<feature type="active site" evidence="1">
    <location>
        <position position="264"/>
    </location>
</feature>
<feature type="binding site" evidence="1">
    <location>
        <begin position="195"/>
        <end position="198"/>
    </location>
    <ligand>
        <name>ATP</name>
        <dbReference type="ChEBI" id="CHEBI:30616"/>
    </ligand>
</feature>
<feature type="modified residue" description="N6-acetyllysine" evidence="1">
    <location>
        <position position="179"/>
    </location>
</feature>
<keyword id="KW-0007">Acetylation</keyword>
<keyword id="KW-0067">ATP-binding</keyword>
<keyword id="KW-0119">Carbohydrate metabolism</keyword>
<keyword id="KW-0418">Kinase</keyword>
<keyword id="KW-0511">Multifunctional enzyme</keyword>
<keyword id="KW-0547">Nucleotide-binding</keyword>
<keyword id="KW-0548">Nucleotidyltransferase</keyword>
<keyword id="KW-1185">Reference proteome</keyword>
<keyword id="KW-0808">Transferase</keyword>
<name>HLDE_ECO45</name>
<gene>
    <name evidence="1" type="primary">hldE</name>
    <name type="ordered locus">ECS88_3449</name>
</gene>
<proteinExistence type="inferred from homology"/>